<accession>Q8Z896</accession>
<proteinExistence type="inferred from homology"/>
<gene>
    <name evidence="1" type="primary">hutH</name>
    <name type="ordered locus">STY0824</name>
    <name type="ordered locus">t2096</name>
</gene>
<organism>
    <name type="scientific">Salmonella typhi</name>
    <dbReference type="NCBI Taxonomy" id="90370"/>
    <lineage>
        <taxon>Bacteria</taxon>
        <taxon>Pseudomonadati</taxon>
        <taxon>Pseudomonadota</taxon>
        <taxon>Gammaproteobacteria</taxon>
        <taxon>Enterobacterales</taxon>
        <taxon>Enterobacteriaceae</taxon>
        <taxon>Salmonella</taxon>
    </lineage>
</organism>
<protein>
    <recommendedName>
        <fullName evidence="1">Histidine ammonia-lyase</fullName>
        <shortName evidence="1">Histidase</shortName>
        <ecNumber evidence="1">4.3.1.3</ecNumber>
    </recommendedName>
</protein>
<name>HUTH_SALTI</name>
<evidence type="ECO:0000255" key="1">
    <source>
        <dbReference type="HAMAP-Rule" id="MF_00229"/>
    </source>
</evidence>
<comment type="catalytic activity">
    <reaction evidence="1">
        <text>L-histidine = trans-urocanate + NH4(+)</text>
        <dbReference type="Rhea" id="RHEA:21232"/>
        <dbReference type="ChEBI" id="CHEBI:17771"/>
        <dbReference type="ChEBI" id="CHEBI:28938"/>
        <dbReference type="ChEBI" id="CHEBI:57595"/>
        <dbReference type="EC" id="4.3.1.3"/>
    </reaction>
</comment>
<comment type="pathway">
    <text evidence="1">Amino-acid degradation; L-histidine degradation into L-glutamate; N-formimidoyl-L-glutamate from L-histidine: step 1/3.</text>
</comment>
<comment type="subcellular location">
    <subcellularLocation>
        <location evidence="1">Cytoplasm</location>
    </subcellularLocation>
</comment>
<comment type="PTM">
    <text evidence="1">Contains an active site 4-methylidene-imidazol-5-one (MIO), which is formed autocatalytically by cyclization and dehydration of residues Ala-Ser-Gly.</text>
</comment>
<comment type="similarity">
    <text evidence="1">Belongs to the PAL/histidase family.</text>
</comment>
<feature type="chain" id="PRO_0000161025" description="Histidine ammonia-lyase">
    <location>
        <begin position="1"/>
        <end position="506"/>
    </location>
</feature>
<feature type="modified residue" description="2,3-didehydroalanine (Ser)" evidence="1">
    <location>
        <position position="144"/>
    </location>
</feature>
<feature type="cross-link" description="5-imidazolinone (Ala-Gly)" evidence="1">
    <location>
        <begin position="143"/>
        <end position="145"/>
    </location>
</feature>
<dbReference type="EC" id="4.3.1.3" evidence="1"/>
<dbReference type="EMBL" id="AL513382">
    <property type="protein sequence ID" value="CAD05239.1"/>
    <property type="molecule type" value="Genomic_DNA"/>
</dbReference>
<dbReference type="EMBL" id="AE014613">
    <property type="protein sequence ID" value="AAO69713.1"/>
    <property type="molecule type" value="Genomic_DNA"/>
</dbReference>
<dbReference type="RefSeq" id="NP_455333.1">
    <property type="nucleotide sequence ID" value="NC_003198.1"/>
</dbReference>
<dbReference type="RefSeq" id="WP_001095232.1">
    <property type="nucleotide sequence ID" value="NZ_WSUR01000021.1"/>
</dbReference>
<dbReference type="SMR" id="Q8Z896"/>
<dbReference type="STRING" id="220341.gene:17584829"/>
<dbReference type="KEGG" id="stt:t2096"/>
<dbReference type="KEGG" id="sty:STY0824"/>
<dbReference type="PATRIC" id="fig|220341.7.peg.828"/>
<dbReference type="eggNOG" id="COG2986">
    <property type="taxonomic scope" value="Bacteria"/>
</dbReference>
<dbReference type="HOGENOM" id="CLU_014801_4_0_6"/>
<dbReference type="OMA" id="YSLRCMP"/>
<dbReference type="OrthoDB" id="9806955at2"/>
<dbReference type="UniPathway" id="UPA00379">
    <property type="reaction ID" value="UER00549"/>
</dbReference>
<dbReference type="Proteomes" id="UP000000541">
    <property type="component" value="Chromosome"/>
</dbReference>
<dbReference type="Proteomes" id="UP000002670">
    <property type="component" value="Chromosome"/>
</dbReference>
<dbReference type="GO" id="GO:0005737">
    <property type="term" value="C:cytoplasm"/>
    <property type="evidence" value="ECO:0007669"/>
    <property type="project" value="UniProtKB-SubCell"/>
</dbReference>
<dbReference type="GO" id="GO:0004397">
    <property type="term" value="F:histidine ammonia-lyase activity"/>
    <property type="evidence" value="ECO:0007669"/>
    <property type="project" value="UniProtKB-UniRule"/>
</dbReference>
<dbReference type="GO" id="GO:0019556">
    <property type="term" value="P:L-histidine catabolic process to glutamate and formamide"/>
    <property type="evidence" value="ECO:0007669"/>
    <property type="project" value="UniProtKB-UniPathway"/>
</dbReference>
<dbReference type="GO" id="GO:0019557">
    <property type="term" value="P:L-histidine catabolic process to glutamate and formate"/>
    <property type="evidence" value="ECO:0007669"/>
    <property type="project" value="UniProtKB-UniPathway"/>
</dbReference>
<dbReference type="CDD" id="cd00332">
    <property type="entry name" value="PAL-HAL"/>
    <property type="match status" value="1"/>
</dbReference>
<dbReference type="FunFam" id="1.10.275.10:FF:000005">
    <property type="entry name" value="Histidine ammonia-lyase"/>
    <property type="match status" value="1"/>
</dbReference>
<dbReference type="FunFam" id="1.20.200.10:FF:000003">
    <property type="entry name" value="Histidine ammonia-lyase"/>
    <property type="match status" value="1"/>
</dbReference>
<dbReference type="Gene3D" id="1.20.200.10">
    <property type="entry name" value="Fumarase/aspartase (Central domain)"/>
    <property type="match status" value="1"/>
</dbReference>
<dbReference type="Gene3D" id="1.10.275.10">
    <property type="entry name" value="Fumarase/aspartase (N-terminal domain)"/>
    <property type="match status" value="1"/>
</dbReference>
<dbReference type="HAMAP" id="MF_00229">
    <property type="entry name" value="His_ammonia_lyase"/>
    <property type="match status" value="1"/>
</dbReference>
<dbReference type="InterPro" id="IPR001106">
    <property type="entry name" value="Aromatic_Lyase"/>
</dbReference>
<dbReference type="InterPro" id="IPR024083">
    <property type="entry name" value="Fumarase/histidase_N"/>
</dbReference>
<dbReference type="InterPro" id="IPR005921">
    <property type="entry name" value="HutH"/>
</dbReference>
<dbReference type="InterPro" id="IPR008948">
    <property type="entry name" value="L-Aspartase-like"/>
</dbReference>
<dbReference type="InterPro" id="IPR022313">
    <property type="entry name" value="Phe/His_NH3-lyase_AS"/>
</dbReference>
<dbReference type="NCBIfam" id="TIGR01225">
    <property type="entry name" value="hutH"/>
    <property type="match status" value="1"/>
</dbReference>
<dbReference type="NCBIfam" id="NF006871">
    <property type="entry name" value="PRK09367.1"/>
    <property type="match status" value="1"/>
</dbReference>
<dbReference type="PANTHER" id="PTHR10362">
    <property type="entry name" value="HISTIDINE AMMONIA-LYASE"/>
    <property type="match status" value="1"/>
</dbReference>
<dbReference type="Pfam" id="PF00221">
    <property type="entry name" value="Lyase_aromatic"/>
    <property type="match status" value="1"/>
</dbReference>
<dbReference type="SUPFAM" id="SSF48557">
    <property type="entry name" value="L-aspartase-like"/>
    <property type="match status" value="1"/>
</dbReference>
<dbReference type="PROSITE" id="PS00488">
    <property type="entry name" value="PAL_HISTIDASE"/>
    <property type="match status" value="1"/>
</dbReference>
<keyword id="KW-0963">Cytoplasm</keyword>
<keyword id="KW-0369">Histidine metabolism</keyword>
<keyword id="KW-0456">Lyase</keyword>
<sequence>MNTMTLTPGQLSLSQLYDVWRHPVQLRLDASAIDGINASVACVNDIVAEGRTAYGINTGFGLLAQTRIADEDLQNLQRSLVLSHAAGVGDPLDDAMVRLIMVLKINSLARGFSGIRLSVIEALIALVNAGVYPLIPAKGSVGASGDLAPLAHLSLTLLGEGKARWQGEWLPAQAALKKAGLEPVALAAKEGLALLNGTQASTAFALRGLFEAQELFASAVVCGALTTEAVLGSCRPFDARIHAARGQQGQIDVARLFRHLLTDTSAIAESHHHCHKVQDPYSLRCQPQVMGACLTQLRQTKEVLLAEANAVSDNPLVFAEAGEVISGGNFHAEPVAMAADNLALAIAEIGALSERRITLMMDKHMSQLPPFLVKNGGVNSGFMIAQVTAAALASENKALAHPHSVDSLPTSANQEDHVSMAPAAGRRLWEMAANTRGVIAVEWLAACQGIDLREGLTSSPLLEQARQTLRERVAHYTQDRFFAPDIECATTLLAQGALQRLVPDFM</sequence>
<reference key="1">
    <citation type="journal article" date="2001" name="Nature">
        <title>Complete genome sequence of a multiple drug resistant Salmonella enterica serovar Typhi CT18.</title>
        <authorList>
            <person name="Parkhill J."/>
            <person name="Dougan G."/>
            <person name="James K.D."/>
            <person name="Thomson N.R."/>
            <person name="Pickard D."/>
            <person name="Wain J."/>
            <person name="Churcher C.M."/>
            <person name="Mungall K.L."/>
            <person name="Bentley S.D."/>
            <person name="Holden M.T.G."/>
            <person name="Sebaihia M."/>
            <person name="Baker S."/>
            <person name="Basham D."/>
            <person name="Brooks K."/>
            <person name="Chillingworth T."/>
            <person name="Connerton P."/>
            <person name="Cronin A."/>
            <person name="Davis P."/>
            <person name="Davies R.M."/>
            <person name="Dowd L."/>
            <person name="White N."/>
            <person name="Farrar J."/>
            <person name="Feltwell T."/>
            <person name="Hamlin N."/>
            <person name="Haque A."/>
            <person name="Hien T.T."/>
            <person name="Holroyd S."/>
            <person name="Jagels K."/>
            <person name="Krogh A."/>
            <person name="Larsen T.S."/>
            <person name="Leather S."/>
            <person name="Moule S."/>
            <person name="O'Gaora P."/>
            <person name="Parry C."/>
            <person name="Quail M.A."/>
            <person name="Rutherford K.M."/>
            <person name="Simmonds M."/>
            <person name="Skelton J."/>
            <person name="Stevens K."/>
            <person name="Whitehead S."/>
            <person name="Barrell B.G."/>
        </authorList>
    </citation>
    <scope>NUCLEOTIDE SEQUENCE [LARGE SCALE GENOMIC DNA]</scope>
    <source>
        <strain>CT18</strain>
    </source>
</reference>
<reference key="2">
    <citation type="journal article" date="2003" name="J. Bacteriol.">
        <title>Comparative genomics of Salmonella enterica serovar Typhi strains Ty2 and CT18.</title>
        <authorList>
            <person name="Deng W."/>
            <person name="Liou S.-R."/>
            <person name="Plunkett G. III"/>
            <person name="Mayhew G.F."/>
            <person name="Rose D.J."/>
            <person name="Burland V."/>
            <person name="Kodoyianni V."/>
            <person name="Schwartz D.C."/>
            <person name="Blattner F.R."/>
        </authorList>
    </citation>
    <scope>NUCLEOTIDE SEQUENCE [LARGE SCALE GENOMIC DNA]</scope>
    <source>
        <strain>ATCC 700931 / Ty2</strain>
    </source>
</reference>